<dbReference type="EMBL" id="AE015925">
    <property type="protein sequence ID" value="AAP04963.1"/>
    <property type="molecule type" value="Genomic_DNA"/>
</dbReference>
<dbReference type="RefSeq" id="WP_006342890.1">
    <property type="nucleotide sequence ID" value="NC_003361.3"/>
</dbReference>
<dbReference type="SMR" id="Q824E0"/>
<dbReference type="STRING" id="227941.CCA_00212"/>
<dbReference type="GeneID" id="93024766"/>
<dbReference type="KEGG" id="cca:CCA_00212"/>
<dbReference type="eggNOG" id="COG1327">
    <property type="taxonomic scope" value="Bacteria"/>
</dbReference>
<dbReference type="HOGENOM" id="CLU_108412_0_0_0"/>
<dbReference type="OrthoDB" id="9807461at2"/>
<dbReference type="Proteomes" id="UP000002193">
    <property type="component" value="Chromosome"/>
</dbReference>
<dbReference type="GO" id="GO:0005524">
    <property type="term" value="F:ATP binding"/>
    <property type="evidence" value="ECO:0007669"/>
    <property type="project" value="UniProtKB-KW"/>
</dbReference>
<dbReference type="GO" id="GO:0003677">
    <property type="term" value="F:DNA binding"/>
    <property type="evidence" value="ECO:0007669"/>
    <property type="project" value="UniProtKB-KW"/>
</dbReference>
<dbReference type="GO" id="GO:0008270">
    <property type="term" value="F:zinc ion binding"/>
    <property type="evidence" value="ECO:0007669"/>
    <property type="project" value="UniProtKB-UniRule"/>
</dbReference>
<dbReference type="GO" id="GO:0045892">
    <property type="term" value="P:negative regulation of DNA-templated transcription"/>
    <property type="evidence" value="ECO:0007669"/>
    <property type="project" value="UniProtKB-UniRule"/>
</dbReference>
<dbReference type="HAMAP" id="MF_00440">
    <property type="entry name" value="NrdR"/>
    <property type="match status" value="1"/>
</dbReference>
<dbReference type="InterPro" id="IPR005144">
    <property type="entry name" value="ATP-cone_dom"/>
</dbReference>
<dbReference type="InterPro" id="IPR055173">
    <property type="entry name" value="NrdR-like_N"/>
</dbReference>
<dbReference type="InterPro" id="IPR003796">
    <property type="entry name" value="RNR_NrdR-like"/>
</dbReference>
<dbReference type="NCBIfam" id="TIGR00244">
    <property type="entry name" value="transcriptional regulator NrdR"/>
    <property type="match status" value="1"/>
</dbReference>
<dbReference type="PANTHER" id="PTHR30455">
    <property type="entry name" value="TRANSCRIPTIONAL REPRESSOR NRDR"/>
    <property type="match status" value="1"/>
</dbReference>
<dbReference type="PANTHER" id="PTHR30455:SF2">
    <property type="entry name" value="TRANSCRIPTIONAL REPRESSOR NRDR"/>
    <property type="match status" value="1"/>
</dbReference>
<dbReference type="Pfam" id="PF03477">
    <property type="entry name" value="ATP-cone"/>
    <property type="match status" value="1"/>
</dbReference>
<dbReference type="Pfam" id="PF22811">
    <property type="entry name" value="Zn_ribbon_NrdR"/>
    <property type="match status" value="1"/>
</dbReference>
<dbReference type="PROSITE" id="PS51161">
    <property type="entry name" value="ATP_CONE"/>
    <property type="match status" value="1"/>
</dbReference>
<organism>
    <name type="scientific">Chlamydia caviae (strain ATCC VR-813 / DSM 19441 / 03DC25 / GPIC)</name>
    <name type="common">Chlamydophila caviae</name>
    <dbReference type="NCBI Taxonomy" id="227941"/>
    <lineage>
        <taxon>Bacteria</taxon>
        <taxon>Pseudomonadati</taxon>
        <taxon>Chlamydiota</taxon>
        <taxon>Chlamydiia</taxon>
        <taxon>Chlamydiales</taxon>
        <taxon>Chlamydiaceae</taxon>
        <taxon>Chlamydia/Chlamydophila group</taxon>
        <taxon>Chlamydia</taxon>
    </lineage>
</organism>
<proteinExistence type="inferred from homology"/>
<feature type="chain" id="PRO_0000182283" description="Transcriptional repressor NrdR">
    <location>
        <begin position="1"/>
        <end position="152"/>
    </location>
</feature>
<feature type="domain" description="ATP-cone" evidence="1">
    <location>
        <begin position="48"/>
        <end position="138"/>
    </location>
</feature>
<feature type="zinc finger region" evidence="1">
    <location>
        <begin position="3"/>
        <end position="34"/>
    </location>
</feature>
<name>NRDR_CHLCV</name>
<gene>
    <name evidence="1" type="primary">nrdR</name>
    <name type="ordered locus">CCA_00212</name>
</gene>
<comment type="function">
    <text evidence="1">Negatively regulates transcription of bacterial ribonucleotide reductase nrd genes and operons by binding to NrdR-boxes.</text>
</comment>
<comment type="cofactor">
    <cofactor evidence="1">
        <name>Zn(2+)</name>
        <dbReference type="ChEBI" id="CHEBI:29105"/>
    </cofactor>
    <text evidence="1">Binds 1 zinc ion.</text>
</comment>
<comment type="similarity">
    <text evidence="1">Belongs to the NrdR family.</text>
</comment>
<evidence type="ECO:0000255" key="1">
    <source>
        <dbReference type="HAMAP-Rule" id="MF_00440"/>
    </source>
</evidence>
<keyword id="KW-0067">ATP-binding</keyword>
<keyword id="KW-0238">DNA-binding</keyword>
<keyword id="KW-0479">Metal-binding</keyword>
<keyword id="KW-0547">Nucleotide-binding</keyword>
<keyword id="KW-0678">Repressor</keyword>
<keyword id="KW-0804">Transcription</keyword>
<keyword id="KW-0805">Transcription regulation</keyword>
<keyword id="KW-0862">Zinc</keyword>
<keyword id="KW-0863">Zinc-finger</keyword>
<reference key="1">
    <citation type="journal article" date="2003" name="Nucleic Acids Res.">
        <title>Genome sequence of Chlamydophila caviae (Chlamydia psittaci GPIC): examining the role of niche-specific genes in the evolution of the Chlamydiaceae.</title>
        <authorList>
            <person name="Read T.D."/>
            <person name="Myers G.S.A."/>
            <person name="Brunham R.C."/>
            <person name="Nelson W.C."/>
            <person name="Paulsen I.T."/>
            <person name="Heidelberg J.F."/>
            <person name="Holtzapple E.K."/>
            <person name="Khouri H.M."/>
            <person name="Federova N.B."/>
            <person name="Carty H.A."/>
            <person name="Umayam L.A."/>
            <person name="Haft D.H."/>
            <person name="Peterson J.D."/>
            <person name="Beanan M.J."/>
            <person name="White O."/>
            <person name="Salzberg S.L."/>
            <person name="Hsia R.-C."/>
            <person name="McClarty G."/>
            <person name="Rank R.G."/>
            <person name="Bavoil P.M."/>
            <person name="Fraser C.M."/>
        </authorList>
    </citation>
    <scope>NUCLEOTIDE SEQUENCE [LARGE SCALE GENOMIC DNA]</scope>
    <source>
        <strain>ATCC VR-813 / DSM 19441 / 03DC25 / GPIC</strain>
    </source>
</reference>
<sequence length="152" mass="17400">MQCPFCNHGELKVIDSRNAPEANAIKRRRECLNCGQRFTTFETVELTLQVLKRDGRYENFQESKLINGLNAASSHTRIGQDQVHAIASNVKSELLGKQNREISTKEIGELVMKYLKKADMIAYIRFACVYRRFKDVGELMEVLLSATPDMEK</sequence>
<protein>
    <recommendedName>
        <fullName evidence="1">Transcriptional repressor NrdR</fullName>
    </recommendedName>
</protein>
<accession>Q824E0</accession>